<feature type="chain" id="PRO_1000002467" description="Holliday junction branch migration complex subunit RuvA">
    <location>
        <begin position="1"/>
        <end position="202"/>
    </location>
</feature>
<feature type="region of interest" description="Domain I" evidence="1">
    <location>
        <begin position="1"/>
        <end position="62"/>
    </location>
</feature>
<feature type="region of interest" description="Domain II" evidence="1">
    <location>
        <begin position="63"/>
        <end position="141"/>
    </location>
</feature>
<feature type="region of interest" description="Flexible linker" evidence="1">
    <location>
        <begin position="142"/>
        <end position="151"/>
    </location>
</feature>
<feature type="region of interest" description="Domain III" evidence="1">
    <location>
        <begin position="152"/>
        <end position="202"/>
    </location>
</feature>
<accession>Q03R35</accession>
<sequence>MYEYLHGLITAVYPDHVVVDVNGVGYLVNTANPYRYEVSATAVTIYVYQAVSDTAQTLYGFSDFAEKQLFLKLINVNGIGPKSALAILANPDHQGLMMAIKTNDTGFLTKFPGVGKKTAGQIVLDLQNKLDDLAPATDDNTLFTPEVAPTTTENPQLADALAALTALGYRETAVKKITAQLRQFNGQTTNDYLSEGLRLLTK</sequence>
<gene>
    <name evidence="1" type="primary">ruvA</name>
    <name type="ordered locus">LVIS_1231</name>
</gene>
<keyword id="KW-0963">Cytoplasm</keyword>
<keyword id="KW-0227">DNA damage</keyword>
<keyword id="KW-0233">DNA recombination</keyword>
<keyword id="KW-0234">DNA repair</keyword>
<keyword id="KW-0238">DNA-binding</keyword>
<keyword id="KW-1185">Reference proteome</keyword>
<evidence type="ECO:0000255" key="1">
    <source>
        <dbReference type="HAMAP-Rule" id="MF_00031"/>
    </source>
</evidence>
<name>RUVA_LEVBA</name>
<protein>
    <recommendedName>
        <fullName evidence="1">Holliday junction branch migration complex subunit RuvA</fullName>
    </recommendedName>
</protein>
<organism>
    <name type="scientific">Levilactobacillus brevis (strain ATCC 367 / BCRC 12310 / CIP 105137 / JCM 1170 / LMG 11437 / NCIMB 947 / NCTC 947)</name>
    <name type="common">Lactobacillus brevis</name>
    <dbReference type="NCBI Taxonomy" id="387344"/>
    <lineage>
        <taxon>Bacteria</taxon>
        <taxon>Bacillati</taxon>
        <taxon>Bacillota</taxon>
        <taxon>Bacilli</taxon>
        <taxon>Lactobacillales</taxon>
        <taxon>Lactobacillaceae</taxon>
        <taxon>Levilactobacillus</taxon>
    </lineage>
</organism>
<proteinExistence type="inferred from homology"/>
<comment type="function">
    <text evidence="1">The RuvA-RuvB-RuvC complex processes Holliday junction (HJ) DNA during genetic recombination and DNA repair, while the RuvA-RuvB complex plays an important role in the rescue of blocked DNA replication forks via replication fork reversal (RFR). RuvA specifically binds to HJ cruciform DNA, conferring on it an open structure. The RuvB hexamer acts as an ATP-dependent pump, pulling dsDNA into and through the RuvAB complex. HJ branch migration allows RuvC to scan DNA until it finds its consensus sequence, where it cleaves and resolves the cruciform DNA.</text>
</comment>
<comment type="subunit">
    <text evidence="1">Homotetramer. Forms an RuvA(8)-RuvB(12)-Holliday junction (HJ) complex. HJ DNA is sandwiched between 2 RuvA tetramers; dsDNA enters through RuvA and exits via RuvB. An RuvB hexamer assembles on each DNA strand where it exits the tetramer. Each RuvB hexamer is contacted by two RuvA subunits (via domain III) on 2 adjacent RuvB subunits; this complex drives branch migration. In the full resolvosome a probable DNA-RuvA(4)-RuvB(12)-RuvC(2) complex forms which resolves the HJ.</text>
</comment>
<comment type="subcellular location">
    <subcellularLocation>
        <location evidence="1">Cytoplasm</location>
    </subcellularLocation>
</comment>
<comment type="domain">
    <text evidence="1">Has three domains with a flexible linker between the domains II and III and assumes an 'L' shape. Domain III is highly mobile and contacts RuvB.</text>
</comment>
<comment type="similarity">
    <text evidence="1">Belongs to the RuvA family.</text>
</comment>
<reference key="1">
    <citation type="journal article" date="2006" name="Proc. Natl. Acad. Sci. U.S.A.">
        <title>Comparative genomics of the lactic acid bacteria.</title>
        <authorList>
            <person name="Makarova K.S."/>
            <person name="Slesarev A."/>
            <person name="Wolf Y.I."/>
            <person name="Sorokin A."/>
            <person name="Mirkin B."/>
            <person name="Koonin E.V."/>
            <person name="Pavlov A."/>
            <person name="Pavlova N."/>
            <person name="Karamychev V."/>
            <person name="Polouchine N."/>
            <person name="Shakhova V."/>
            <person name="Grigoriev I."/>
            <person name="Lou Y."/>
            <person name="Rohksar D."/>
            <person name="Lucas S."/>
            <person name="Huang K."/>
            <person name="Goodstein D.M."/>
            <person name="Hawkins T."/>
            <person name="Plengvidhya V."/>
            <person name="Welker D."/>
            <person name="Hughes J."/>
            <person name="Goh Y."/>
            <person name="Benson A."/>
            <person name="Baldwin K."/>
            <person name="Lee J.-H."/>
            <person name="Diaz-Muniz I."/>
            <person name="Dosti B."/>
            <person name="Smeianov V."/>
            <person name="Wechter W."/>
            <person name="Barabote R."/>
            <person name="Lorca G."/>
            <person name="Altermann E."/>
            <person name="Barrangou R."/>
            <person name="Ganesan B."/>
            <person name="Xie Y."/>
            <person name="Rawsthorne H."/>
            <person name="Tamir D."/>
            <person name="Parker C."/>
            <person name="Breidt F."/>
            <person name="Broadbent J.R."/>
            <person name="Hutkins R."/>
            <person name="O'Sullivan D."/>
            <person name="Steele J."/>
            <person name="Unlu G."/>
            <person name="Saier M.H. Jr."/>
            <person name="Klaenhammer T."/>
            <person name="Richardson P."/>
            <person name="Kozyavkin S."/>
            <person name="Weimer B.C."/>
            <person name="Mills D.A."/>
        </authorList>
    </citation>
    <scope>NUCLEOTIDE SEQUENCE [LARGE SCALE GENOMIC DNA]</scope>
    <source>
        <strain>ATCC 367 / BCRC 12310 / CIP 105137 / JCM 1170 / LMG 11437 / NCIMB 947 / NCTC 947</strain>
    </source>
</reference>
<dbReference type="EMBL" id="CP000416">
    <property type="protein sequence ID" value="ABJ64337.1"/>
    <property type="molecule type" value="Genomic_DNA"/>
</dbReference>
<dbReference type="RefSeq" id="WP_011667967.1">
    <property type="nucleotide sequence ID" value="NC_008497.1"/>
</dbReference>
<dbReference type="SMR" id="Q03R35"/>
<dbReference type="STRING" id="387344.LVIS_1231"/>
<dbReference type="GeneID" id="56992620"/>
<dbReference type="KEGG" id="lbr:LVIS_1231"/>
<dbReference type="eggNOG" id="COG0632">
    <property type="taxonomic scope" value="Bacteria"/>
</dbReference>
<dbReference type="HOGENOM" id="CLU_087936_1_0_9"/>
<dbReference type="Proteomes" id="UP000001652">
    <property type="component" value="Chromosome"/>
</dbReference>
<dbReference type="GO" id="GO:0005737">
    <property type="term" value="C:cytoplasm"/>
    <property type="evidence" value="ECO:0007669"/>
    <property type="project" value="UniProtKB-SubCell"/>
</dbReference>
<dbReference type="GO" id="GO:0009379">
    <property type="term" value="C:Holliday junction helicase complex"/>
    <property type="evidence" value="ECO:0007669"/>
    <property type="project" value="InterPro"/>
</dbReference>
<dbReference type="GO" id="GO:0048476">
    <property type="term" value="C:Holliday junction resolvase complex"/>
    <property type="evidence" value="ECO:0007669"/>
    <property type="project" value="UniProtKB-UniRule"/>
</dbReference>
<dbReference type="GO" id="GO:0005524">
    <property type="term" value="F:ATP binding"/>
    <property type="evidence" value="ECO:0007669"/>
    <property type="project" value="InterPro"/>
</dbReference>
<dbReference type="GO" id="GO:0000400">
    <property type="term" value="F:four-way junction DNA binding"/>
    <property type="evidence" value="ECO:0007669"/>
    <property type="project" value="UniProtKB-UniRule"/>
</dbReference>
<dbReference type="GO" id="GO:0009378">
    <property type="term" value="F:four-way junction helicase activity"/>
    <property type="evidence" value="ECO:0007669"/>
    <property type="project" value="InterPro"/>
</dbReference>
<dbReference type="GO" id="GO:0006310">
    <property type="term" value="P:DNA recombination"/>
    <property type="evidence" value="ECO:0007669"/>
    <property type="project" value="UniProtKB-UniRule"/>
</dbReference>
<dbReference type="GO" id="GO:0006281">
    <property type="term" value="P:DNA repair"/>
    <property type="evidence" value="ECO:0007669"/>
    <property type="project" value="UniProtKB-UniRule"/>
</dbReference>
<dbReference type="Gene3D" id="1.10.150.20">
    <property type="entry name" value="5' to 3' exonuclease, C-terminal subdomain"/>
    <property type="match status" value="1"/>
</dbReference>
<dbReference type="Gene3D" id="1.10.8.10">
    <property type="entry name" value="DNA helicase RuvA subunit, C-terminal domain"/>
    <property type="match status" value="1"/>
</dbReference>
<dbReference type="Gene3D" id="2.40.50.140">
    <property type="entry name" value="Nucleic acid-binding proteins"/>
    <property type="match status" value="1"/>
</dbReference>
<dbReference type="HAMAP" id="MF_00031">
    <property type="entry name" value="DNA_HJ_migration_RuvA"/>
    <property type="match status" value="1"/>
</dbReference>
<dbReference type="InterPro" id="IPR013849">
    <property type="entry name" value="DNA_helicase_Holl-junc_RuvA_I"/>
</dbReference>
<dbReference type="InterPro" id="IPR003583">
    <property type="entry name" value="Hlx-hairpin-Hlx_DNA-bd_motif"/>
</dbReference>
<dbReference type="InterPro" id="IPR012340">
    <property type="entry name" value="NA-bd_OB-fold"/>
</dbReference>
<dbReference type="InterPro" id="IPR000085">
    <property type="entry name" value="RuvA"/>
</dbReference>
<dbReference type="InterPro" id="IPR010994">
    <property type="entry name" value="RuvA_2-like"/>
</dbReference>
<dbReference type="InterPro" id="IPR011114">
    <property type="entry name" value="RuvA_C"/>
</dbReference>
<dbReference type="InterPro" id="IPR036267">
    <property type="entry name" value="RuvA_C_sf"/>
</dbReference>
<dbReference type="NCBIfam" id="TIGR00084">
    <property type="entry name" value="ruvA"/>
    <property type="match status" value="1"/>
</dbReference>
<dbReference type="Pfam" id="PF14520">
    <property type="entry name" value="HHH_5"/>
    <property type="match status" value="1"/>
</dbReference>
<dbReference type="Pfam" id="PF07499">
    <property type="entry name" value="RuvA_C"/>
    <property type="match status" value="1"/>
</dbReference>
<dbReference type="Pfam" id="PF01330">
    <property type="entry name" value="RuvA_N"/>
    <property type="match status" value="1"/>
</dbReference>
<dbReference type="SMART" id="SM00278">
    <property type="entry name" value="HhH1"/>
    <property type="match status" value="2"/>
</dbReference>
<dbReference type="SUPFAM" id="SSF46929">
    <property type="entry name" value="DNA helicase RuvA subunit, C-terminal domain"/>
    <property type="match status" value="1"/>
</dbReference>
<dbReference type="SUPFAM" id="SSF50249">
    <property type="entry name" value="Nucleic acid-binding proteins"/>
    <property type="match status" value="1"/>
</dbReference>
<dbReference type="SUPFAM" id="SSF47781">
    <property type="entry name" value="RuvA domain 2-like"/>
    <property type="match status" value="1"/>
</dbReference>